<feature type="chain" id="PRO_0000080099" description="Ribokinase">
    <location>
        <begin position="1"/>
        <end position="306"/>
    </location>
</feature>
<feature type="active site" description="Proton acceptor" evidence="1">
    <location>
        <position position="253"/>
    </location>
</feature>
<feature type="binding site" evidence="1">
    <location>
        <begin position="12"/>
        <end position="14"/>
    </location>
    <ligand>
        <name>substrate</name>
    </ligand>
</feature>
<feature type="binding site" evidence="1">
    <location>
        <begin position="40"/>
        <end position="44"/>
    </location>
    <ligand>
        <name>substrate</name>
    </ligand>
</feature>
<feature type="binding site" evidence="1">
    <location>
        <position position="141"/>
    </location>
    <ligand>
        <name>substrate</name>
    </ligand>
</feature>
<feature type="binding site" evidence="1">
    <location>
        <position position="185"/>
    </location>
    <ligand>
        <name>ATP</name>
        <dbReference type="ChEBI" id="CHEBI:30616"/>
    </ligand>
</feature>
<feature type="binding site" evidence="1">
    <location>
        <begin position="221"/>
        <end position="226"/>
    </location>
    <ligand>
        <name>ATP</name>
        <dbReference type="ChEBI" id="CHEBI:30616"/>
    </ligand>
</feature>
<feature type="binding site" evidence="1">
    <location>
        <position position="247"/>
    </location>
    <ligand>
        <name>K(+)</name>
        <dbReference type="ChEBI" id="CHEBI:29103"/>
    </ligand>
</feature>
<feature type="binding site" evidence="1">
    <location>
        <position position="249"/>
    </location>
    <ligand>
        <name>K(+)</name>
        <dbReference type="ChEBI" id="CHEBI:29103"/>
    </ligand>
</feature>
<feature type="binding site" evidence="1">
    <location>
        <begin position="252"/>
        <end position="253"/>
    </location>
    <ligand>
        <name>ATP</name>
        <dbReference type="ChEBI" id="CHEBI:30616"/>
    </ligand>
</feature>
<feature type="binding site" evidence="1">
    <location>
        <position position="253"/>
    </location>
    <ligand>
        <name>substrate</name>
    </ligand>
</feature>
<feature type="binding site" evidence="1">
    <location>
        <position position="283"/>
    </location>
    <ligand>
        <name>K(+)</name>
        <dbReference type="ChEBI" id="CHEBI:29103"/>
    </ligand>
</feature>
<feature type="binding site" evidence="1">
    <location>
        <position position="286"/>
    </location>
    <ligand>
        <name>K(+)</name>
        <dbReference type="ChEBI" id="CHEBI:29103"/>
    </ligand>
</feature>
<feature type="binding site" evidence="1">
    <location>
        <position position="288"/>
    </location>
    <ligand>
        <name>K(+)</name>
        <dbReference type="ChEBI" id="CHEBI:29103"/>
    </ligand>
</feature>
<feature type="binding site" evidence="1">
    <location>
        <position position="292"/>
    </location>
    <ligand>
        <name>K(+)</name>
        <dbReference type="ChEBI" id="CHEBI:29103"/>
    </ligand>
</feature>
<evidence type="ECO:0000255" key="1">
    <source>
        <dbReference type="HAMAP-Rule" id="MF_01987"/>
    </source>
</evidence>
<gene>
    <name evidence="1" type="primary">rbsK</name>
    <name type="ordered locus">HI_0505</name>
</gene>
<accession>P44331</accession>
<sequence>MRKTLTVLGSINADHVISVPYFTKPGETLTGQNYQIAYGGKGANQAVAAARLGAKVAFISCIGSDSIGKTMKNAFAQEGIDTTHINTVSQEMTGMAFIQVAKSSENSIVLASGANSHLSEMVVRQSEAQIAQSDCLLMQLETPLSGVELAAQIAKKNGVKVVLNPAPAQILSDELLSLIDIITPNETEAEILTGVEVADEQSAVKAASVFHDKGIETVMITLGAKGVFVSRKGKSRIIKGFCVQAIDTTAAGDTFNGGFVTALLEEKSFDEAIRFGQAAAAISVTKKGAQSSIPTRQETLEFLEHA</sequence>
<dbReference type="EC" id="2.7.1.15" evidence="1"/>
<dbReference type="EMBL" id="L42023">
    <property type="protein sequence ID" value="AAC22163.1"/>
    <property type="molecule type" value="Genomic_DNA"/>
</dbReference>
<dbReference type="PIR" id="B64073">
    <property type="entry name" value="B64073"/>
</dbReference>
<dbReference type="RefSeq" id="NP_438663.1">
    <property type="nucleotide sequence ID" value="NC_000907.1"/>
</dbReference>
<dbReference type="SMR" id="P44331"/>
<dbReference type="STRING" id="71421.HI_0505"/>
<dbReference type="EnsemblBacteria" id="AAC22163">
    <property type="protein sequence ID" value="AAC22163"/>
    <property type="gene ID" value="HI_0505"/>
</dbReference>
<dbReference type="KEGG" id="hin:HI_0505"/>
<dbReference type="PATRIC" id="fig|71421.8.peg.524"/>
<dbReference type="eggNOG" id="COG0524">
    <property type="taxonomic scope" value="Bacteria"/>
</dbReference>
<dbReference type="HOGENOM" id="CLU_027634_2_0_6"/>
<dbReference type="OrthoDB" id="9776822at2"/>
<dbReference type="PhylomeDB" id="P44331"/>
<dbReference type="BioCyc" id="HINF71421:G1GJ1-518-MONOMER"/>
<dbReference type="UniPathway" id="UPA00916">
    <property type="reaction ID" value="UER00889"/>
</dbReference>
<dbReference type="Proteomes" id="UP000000579">
    <property type="component" value="Chromosome"/>
</dbReference>
<dbReference type="GO" id="GO:0005829">
    <property type="term" value="C:cytosol"/>
    <property type="evidence" value="ECO:0000318"/>
    <property type="project" value="GO_Central"/>
</dbReference>
<dbReference type="GO" id="GO:0005524">
    <property type="term" value="F:ATP binding"/>
    <property type="evidence" value="ECO:0007669"/>
    <property type="project" value="UniProtKB-UniRule"/>
</dbReference>
<dbReference type="GO" id="GO:0046872">
    <property type="term" value="F:metal ion binding"/>
    <property type="evidence" value="ECO:0007669"/>
    <property type="project" value="UniProtKB-KW"/>
</dbReference>
<dbReference type="GO" id="GO:0004747">
    <property type="term" value="F:ribokinase activity"/>
    <property type="evidence" value="ECO:0007669"/>
    <property type="project" value="UniProtKB-UniRule"/>
</dbReference>
<dbReference type="GO" id="GO:0019303">
    <property type="term" value="P:D-ribose catabolic process"/>
    <property type="evidence" value="ECO:0007669"/>
    <property type="project" value="UniProtKB-UniRule"/>
</dbReference>
<dbReference type="CDD" id="cd01174">
    <property type="entry name" value="ribokinase"/>
    <property type="match status" value="1"/>
</dbReference>
<dbReference type="FunFam" id="3.40.1190.20:FF:000012">
    <property type="entry name" value="Ribokinase"/>
    <property type="match status" value="1"/>
</dbReference>
<dbReference type="Gene3D" id="3.40.1190.20">
    <property type="match status" value="1"/>
</dbReference>
<dbReference type="HAMAP" id="MF_01987">
    <property type="entry name" value="Ribokinase"/>
    <property type="match status" value="1"/>
</dbReference>
<dbReference type="InterPro" id="IPR002173">
    <property type="entry name" value="Carboh/pur_kinase_PfkB_CS"/>
</dbReference>
<dbReference type="InterPro" id="IPR011611">
    <property type="entry name" value="PfkB_dom"/>
</dbReference>
<dbReference type="InterPro" id="IPR002139">
    <property type="entry name" value="Ribo/fructo_kinase"/>
</dbReference>
<dbReference type="InterPro" id="IPR011877">
    <property type="entry name" value="Ribokinase"/>
</dbReference>
<dbReference type="InterPro" id="IPR029056">
    <property type="entry name" value="Ribokinase-like"/>
</dbReference>
<dbReference type="NCBIfam" id="TIGR02152">
    <property type="entry name" value="D_ribokin_bact"/>
    <property type="match status" value="1"/>
</dbReference>
<dbReference type="NCBIfam" id="NF008353">
    <property type="entry name" value="PRK11142.1"/>
    <property type="match status" value="1"/>
</dbReference>
<dbReference type="PANTHER" id="PTHR10584:SF166">
    <property type="entry name" value="RIBOKINASE"/>
    <property type="match status" value="1"/>
</dbReference>
<dbReference type="PANTHER" id="PTHR10584">
    <property type="entry name" value="SUGAR KINASE"/>
    <property type="match status" value="1"/>
</dbReference>
<dbReference type="Pfam" id="PF00294">
    <property type="entry name" value="PfkB"/>
    <property type="match status" value="1"/>
</dbReference>
<dbReference type="PRINTS" id="PR00990">
    <property type="entry name" value="RIBOKINASE"/>
</dbReference>
<dbReference type="SUPFAM" id="SSF53613">
    <property type="entry name" value="Ribokinase-like"/>
    <property type="match status" value="1"/>
</dbReference>
<dbReference type="PROSITE" id="PS00584">
    <property type="entry name" value="PFKB_KINASES_2"/>
    <property type="match status" value="1"/>
</dbReference>
<protein>
    <recommendedName>
        <fullName evidence="1">Ribokinase</fullName>
        <shortName evidence="1">RK</shortName>
        <ecNumber evidence="1">2.7.1.15</ecNumber>
    </recommendedName>
</protein>
<keyword id="KW-0067">ATP-binding</keyword>
<keyword id="KW-0119">Carbohydrate metabolism</keyword>
<keyword id="KW-0963">Cytoplasm</keyword>
<keyword id="KW-0418">Kinase</keyword>
<keyword id="KW-0460">Magnesium</keyword>
<keyword id="KW-0479">Metal-binding</keyword>
<keyword id="KW-0547">Nucleotide-binding</keyword>
<keyword id="KW-0630">Potassium</keyword>
<keyword id="KW-1185">Reference proteome</keyword>
<keyword id="KW-0808">Transferase</keyword>
<organism>
    <name type="scientific">Haemophilus influenzae (strain ATCC 51907 / DSM 11121 / KW20 / Rd)</name>
    <dbReference type="NCBI Taxonomy" id="71421"/>
    <lineage>
        <taxon>Bacteria</taxon>
        <taxon>Pseudomonadati</taxon>
        <taxon>Pseudomonadota</taxon>
        <taxon>Gammaproteobacteria</taxon>
        <taxon>Pasteurellales</taxon>
        <taxon>Pasteurellaceae</taxon>
        <taxon>Haemophilus</taxon>
    </lineage>
</organism>
<name>RBSK_HAEIN</name>
<proteinExistence type="inferred from homology"/>
<comment type="function">
    <text evidence="1">Catalyzes the phosphorylation of ribose at O-5 in a reaction requiring ATP and magnesium. The resulting D-ribose-5-phosphate can then be used either for sythesis of nucleotides, histidine, and tryptophan, or as a component of the pentose phosphate pathway.</text>
</comment>
<comment type="catalytic activity">
    <reaction evidence="1">
        <text>D-ribose + ATP = D-ribose 5-phosphate + ADP + H(+)</text>
        <dbReference type="Rhea" id="RHEA:13697"/>
        <dbReference type="ChEBI" id="CHEBI:15378"/>
        <dbReference type="ChEBI" id="CHEBI:30616"/>
        <dbReference type="ChEBI" id="CHEBI:47013"/>
        <dbReference type="ChEBI" id="CHEBI:78346"/>
        <dbReference type="ChEBI" id="CHEBI:456216"/>
        <dbReference type="EC" id="2.7.1.15"/>
    </reaction>
</comment>
<comment type="cofactor">
    <cofactor evidence="1">
        <name>Mg(2+)</name>
        <dbReference type="ChEBI" id="CHEBI:18420"/>
    </cofactor>
    <text evidence="1">Requires a divalent cation, most likely magnesium in vivo, as an electrophilic catalyst to aid phosphoryl group transfer. It is the chelate of the metal and the nucleotide that is the actual substrate.</text>
</comment>
<comment type="activity regulation">
    <text evidence="1">Activated by a monovalent cation that binds near, but not in, the active site. The most likely occupant of the site in vivo is potassium. Ion binding induces a conformational change that may alter substrate affinity.</text>
</comment>
<comment type="pathway">
    <text evidence="1">Carbohydrate metabolism; D-ribose degradation; D-ribose 5-phosphate from beta-D-ribopyranose: step 2/2.</text>
</comment>
<comment type="subunit">
    <text evidence="1">Homodimer.</text>
</comment>
<comment type="subcellular location">
    <subcellularLocation>
        <location evidence="1">Cytoplasm</location>
    </subcellularLocation>
</comment>
<comment type="similarity">
    <text evidence="1">Belongs to the carbohydrate kinase PfkB family. Ribokinase subfamily.</text>
</comment>
<reference key="1">
    <citation type="journal article" date="1995" name="Science">
        <title>Whole-genome random sequencing and assembly of Haemophilus influenzae Rd.</title>
        <authorList>
            <person name="Fleischmann R.D."/>
            <person name="Adams M.D."/>
            <person name="White O."/>
            <person name="Clayton R.A."/>
            <person name="Kirkness E.F."/>
            <person name="Kerlavage A.R."/>
            <person name="Bult C.J."/>
            <person name="Tomb J.-F."/>
            <person name="Dougherty B.A."/>
            <person name="Merrick J.M."/>
            <person name="McKenney K."/>
            <person name="Sutton G.G."/>
            <person name="FitzHugh W."/>
            <person name="Fields C.A."/>
            <person name="Gocayne J.D."/>
            <person name="Scott J.D."/>
            <person name="Shirley R."/>
            <person name="Liu L.-I."/>
            <person name="Glodek A."/>
            <person name="Kelley J.M."/>
            <person name="Weidman J.F."/>
            <person name="Phillips C.A."/>
            <person name="Spriggs T."/>
            <person name="Hedblom E."/>
            <person name="Cotton M.D."/>
            <person name="Utterback T.R."/>
            <person name="Hanna M.C."/>
            <person name="Nguyen D.T."/>
            <person name="Saudek D.M."/>
            <person name="Brandon R.C."/>
            <person name="Fine L.D."/>
            <person name="Fritchman J.L."/>
            <person name="Fuhrmann J.L."/>
            <person name="Geoghagen N.S.M."/>
            <person name="Gnehm C.L."/>
            <person name="McDonald L.A."/>
            <person name="Small K.V."/>
            <person name="Fraser C.M."/>
            <person name="Smith H.O."/>
            <person name="Venter J.C."/>
        </authorList>
    </citation>
    <scope>NUCLEOTIDE SEQUENCE [LARGE SCALE GENOMIC DNA]</scope>
    <source>
        <strain>ATCC 51907 / DSM 11121 / KW20 / Rd</strain>
    </source>
</reference>